<organism>
    <name type="scientific">Cronobacter sakazakii (strain ATCC BAA-894)</name>
    <name type="common">Enterobacter sakazakii</name>
    <dbReference type="NCBI Taxonomy" id="290339"/>
    <lineage>
        <taxon>Bacteria</taxon>
        <taxon>Pseudomonadati</taxon>
        <taxon>Pseudomonadota</taxon>
        <taxon>Gammaproteobacteria</taxon>
        <taxon>Enterobacterales</taxon>
        <taxon>Enterobacteriaceae</taxon>
        <taxon>Cronobacter</taxon>
    </lineage>
</organism>
<proteinExistence type="inferred from homology"/>
<protein>
    <recommendedName>
        <fullName evidence="1">Glutamyl-tRNA reductase</fullName>
        <shortName evidence="1">GluTR</shortName>
        <ecNumber evidence="1">1.2.1.70</ecNumber>
    </recommendedName>
</protein>
<name>HEM1_CROS8</name>
<keyword id="KW-0521">NADP</keyword>
<keyword id="KW-0560">Oxidoreductase</keyword>
<keyword id="KW-0627">Porphyrin biosynthesis</keyword>
<keyword id="KW-1185">Reference proteome</keyword>
<comment type="function">
    <text evidence="1">Catalyzes the NADPH-dependent reduction of glutamyl-tRNA(Glu) to glutamate 1-semialdehyde (GSA).</text>
</comment>
<comment type="catalytic activity">
    <reaction evidence="1">
        <text>(S)-4-amino-5-oxopentanoate + tRNA(Glu) + NADP(+) = L-glutamyl-tRNA(Glu) + NADPH + H(+)</text>
        <dbReference type="Rhea" id="RHEA:12344"/>
        <dbReference type="Rhea" id="RHEA-COMP:9663"/>
        <dbReference type="Rhea" id="RHEA-COMP:9680"/>
        <dbReference type="ChEBI" id="CHEBI:15378"/>
        <dbReference type="ChEBI" id="CHEBI:57501"/>
        <dbReference type="ChEBI" id="CHEBI:57783"/>
        <dbReference type="ChEBI" id="CHEBI:58349"/>
        <dbReference type="ChEBI" id="CHEBI:78442"/>
        <dbReference type="ChEBI" id="CHEBI:78520"/>
        <dbReference type="EC" id="1.2.1.70"/>
    </reaction>
</comment>
<comment type="pathway">
    <text evidence="1">Porphyrin-containing compound metabolism; protoporphyrin-IX biosynthesis; 5-aminolevulinate from L-glutamyl-tRNA(Glu): step 1/2.</text>
</comment>
<comment type="subunit">
    <text evidence="1">Homodimer.</text>
</comment>
<comment type="domain">
    <text evidence="1">Possesses an unusual extended V-shaped dimeric structure with each monomer consisting of three distinct domains arranged along a curved 'spinal' alpha-helix. The N-terminal catalytic domain specifically recognizes the glutamate moiety of the substrate. The second domain is the NADPH-binding domain, and the third C-terminal domain is responsible for dimerization.</text>
</comment>
<comment type="miscellaneous">
    <text evidence="1">During catalysis, the active site Cys acts as a nucleophile attacking the alpha-carbonyl group of tRNA-bound glutamate with the formation of a thioester intermediate between enzyme and glutamate, and the concomitant release of tRNA(Glu). The thioester intermediate is finally reduced by direct hydride transfer from NADPH, to form the product GSA.</text>
</comment>
<comment type="similarity">
    <text evidence="1">Belongs to the glutamyl-tRNA reductase family.</text>
</comment>
<comment type="sequence caution" evidence="2">
    <conflict type="erroneous initiation">
        <sequence resource="EMBL-CDS" id="ABU76754"/>
    </conflict>
</comment>
<sequence length="418" mass="46312">MTLLALGINHKTAPVSLRERVTFSPDTLDQALESLLSQPMVQGGVVLSTCNRTELYLSVEEQDNLHDKLVRWLCDYHNLDEEEVRNSLYWHHDNDAVSHLMRVASGLDSLVLGEPQILGQVKKAFADSGRGHANASELERMFQKSFSVAKRVRTETDIGASAVSVAFAACTLARQIFESLSTVTVMLVGAGETIELAARHLREHNVQKMIIANRTRERAQRLADEVGAEVIGLGDIDERLKDADIIISSTASPLPIIGKGMMERALKARRNQPMLLVDIAVPRDVEPEVGKLANAYLYSVDDLQSIIQHNLAQRKAAAVQAESIVEQEACEFMAWLRAQSVSETIREYRAQADQVREELTSKALAALRTGGDAEAIMQDLARKLTNRLIHTPTKSLQQAARDGDDERLHILRNSLGLE</sequence>
<accession>A7MKC0</accession>
<dbReference type="EC" id="1.2.1.70" evidence="1"/>
<dbReference type="EMBL" id="CP000783">
    <property type="protein sequence ID" value="ABU76754.1"/>
    <property type="status" value="ALT_INIT"/>
    <property type="molecule type" value="Genomic_DNA"/>
</dbReference>
<dbReference type="RefSeq" id="WP_004386063.1">
    <property type="nucleotide sequence ID" value="NC_009778.1"/>
</dbReference>
<dbReference type="SMR" id="A7MKC0"/>
<dbReference type="KEGG" id="esa:ESA_01496"/>
<dbReference type="PATRIC" id="fig|290339.8.peg.1327"/>
<dbReference type="HOGENOM" id="CLU_035113_2_2_6"/>
<dbReference type="UniPathway" id="UPA00251">
    <property type="reaction ID" value="UER00316"/>
</dbReference>
<dbReference type="Proteomes" id="UP000000260">
    <property type="component" value="Chromosome"/>
</dbReference>
<dbReference type="GO" id="GO:0008883">
    <property type="term" value="F:glutamyl-tRNA reductase activity"/>
    <property type="evidence" value="ECO:0007669"/>
    <property type="project" value="UniProtKB-UniRule"/>
</dbReference>
<dbReference type="GO" id="GO:0050661">
    <property type="term" value="F:NADP binding"/>
    <property type="evidence" value="ECO:0007669"/>
    <property type="project" value="InterPro"/>
</dbReference>
<dbReference type="GO" id="GO:0019353">
    <property type="term" value="P:protoporphyrinogen IX biosynthetic process from glutamate"/>
    <property type="evidence" value="ECO:0007669"/>
    <property type="project" value="TreeGrafter"/>
</dbReference>
<dbReference type="CDD" id="cd05213">
    <property type="entry name" value="NAD_bind_Glutamyl_tRNA_reduct"/>
    <property type="match status" value="1"/>
</dbReference>
<dbReference type="FunFam" id="3.30.460.30:FF:000001">
    <property type="entry name" value="Glutamyl-tRNA reductase"/>
    <property type="match status" value="1"/>
</dbReference>
<dbReference type="FunFam" id="3.40.50.720:FF:000031">
    <property type="entry name" value="Glutamyl-tRNA reductase"/>
    <property type="match status" value="1"/>
</dbReference>
<dbReference type="Gene3D" id="3.30.460.30">
    <property type="entry name" value="Glutamyl-tRNA reductase, N-terminal domain"/>
    <property type="match status" value="1"/>
</dbReference>
<dbReference type="Gene3D" id="3.40.50.720">
    <property type="entry name" value="NAD(P)-binding Rossmann-like Domain"/>
    <property type="match status" value="1"/>
</dbReference>
<dbReference type="HAMAP" id="MF_00087">
    <property type="entry name" value="Glu_tRNA_reductase"/>
    <property type="match status" value="1"/>
</dbReference>
<dbReference type="InterPro" id="IPR000343">
    <property type="entry name" value="4pyrrol_synth_GluRdtase"/>
</dbReference>
<dbReference type="InterPro" id="IPR015896">
    <property type="entry name" value="4pyrrol_synth_GluRdtase_dimer"/>
</dbReference>
<dbReference type="InterPro" id="IPR015895">
    <property type="entry name" value="4pyrrol_synth_GluRdtase_N"/>
</dbReference>
<dbReference type="InterPro" id="IPR018214">
    <property type="entry name" value="GluRdtase_CS"/>
</dbReference>
<dbReference type="InterPro" id="IPR036453">
    <property type="entry name" value="GluRdtase_dimer_dom_sf"/>
</dbReference>
<dbReference type="InterPro" id="IPR036343">
    <property type="entry name" value="GluRdtase_N_sf"/>
</dbReference>
<dbReference type="InterPro" id="IPR036291">
    <property type="entry name" value="NAD(P)-bd_dom_sf"/>
</dbReference>
<dbReference type="InterPro" id="IPR006151">
    <property type="entry name" value="Shikm_DH/Glu-tRNA_Rdtase"/>
</dbReference>
<dbReference type="NCBIfam" id="TIGR01035">
    <property type="entry name" value="hemA"/>
    <property type="match status" value="1"/>
</dbReference>
<dbReference type="PANTHER" id="PTHR43013">
    <property type="entry name" value="GLUTAMYL-TRNA REDUCTASE"/>
    <property type="match status" value="1"/>
</dbReference>
<dbReference type="PANTHER" id="PTHR43013:SF1">
    <property type="entry name" value="GLUTAMYL-TRNA REDUCTASE"/>
    <property type="match status" value="1"/>
</dbReference>
<dbReference type="Pfam" id="PF00745">
    <property type="entry name" value="GlutR_dimer"/>
    <property type="match status" value="1"/>
</dbReference>
<dbReference type="Pfam" id="PF05201">
    <property type="entry name" value="GlutR_N"/>
    <property type="match status" value="1"/>
</dbReference>
<dbReference type="Pfam" id="PF01488">
    <property type="entry name" value="Shikimate_DH"/>
    <property type="match status" value="1"/>
</dbReference>
<dbReference type="PIRSF" id="PIRSF000445">
    <property type="entry name" value="4pyrrol_synth_GluRdtase"/>
    <property type="match status" value="1"/>
</dbReference>
<dbReference type="SUPFAM" id="SSF69742">
    <property type="entry name" value="Glutamyl tRNA-reductase catalytic, N-terminal domain"/>
    <property type="match status" value="1"/>
</dbReference>
<dbReference type="SUPFAM" id="SSF69075">
    <property type="entry name" value="Glutamyl tRNA-reductase dimerization domain"/>
    <property type="match status" value="1"/>
</dbReference>
<dbReference type="SUPFAM" id="SSF51735">
    <property type="entry name" value="NAD(P)-binding Rossmann-fold domains"/>
    <property type="match status" value="1"/>
</dbReference>
<dbReference type="PROSITE" id="PS00747">
    <property type="entry name" value="GLUTR"/>
    <property type="match status" value="1"/>
</dbReference>
<feature type="chain" id="PRO_0000335029" description="Glutamyl-tRNA reductase">
    <location>
        <begin position="1"/>
        <end position="418"/>
    </location>
</feature>
<feature type="active site" description="Nucleophile" evidence="1">
    <location>
        <position position="50"/>
    </location>
</feature>
<feature type="binding site" evidence="1">
    <location>
        <begin position="49"/>
        <end position="52"/>
    </location>
    <ligand>
        <name>substrate</name>
    </ligand>
</feature>
<feature type="binding site" evidence="1">
    <location>
        <position position="109"/>
    </location>
    <ligand>
        <name>substrate</name>
    </ligand>
</feature>
<feature type="binding site" evidence="1">
    <location>
        <begin position="114"/>
        <end position="116"/>
    </location>
    <ligand>
        <name>substrate</name>
    </ligand>
</feature>
<feature type="binding site" evidence="1">
    <location>
        <position position="120"/>
    </location>
    <ligand>
        <name>substrate</name>
    </ligand>
</feature>
<feature type="binding site" evidence="1">
    <location>
        <begin position="189"/>
        <end position="194"/>
    </location>
    <ligand>
        <name>NADP(+)</name>
        <dbReference type="ChEBI" id="CHEBI:58349"/>
    </ligand>
</feature>
<feature type="site" description="Important for activity" evidence="1">
    <location>
        <position position="99"/>
    </location>
</feature>
<evidence type="ECO:0000255" key="1">
    <source>
        <dbReference type="HAMAP-Rule" id="MF_00087"/>
    </source>
</evidence>
<evidence type="ECO:0000305" key="2"/>
<gene>
    <name evidence="1" type="primary">hemA</name>
    <name type="ordered locus">ESA_01496</name>
</gene>
<reference key="1">
    <citation type="journal article" date="2010" name="PLoS ONE">
        <title>Genome sequence of Cronobacter sakazakii BAA-894 and comparative genomic hybridization analysis with other Cronobacter species.</title>
        <authorList>
            <person name="Kucerova E."/>
            <person name="Clifton S.W."/>
            <person name="Xia X.Q."/>
            <person name="Long F."/>
            <person name="Porwollik S."/>
            <person name="Fulton L."/>
            <person name="Fronick C."/>
            <person name="Minx P."/>
            <person name="Kyung K."/>
            <person name="Warren W."/>
            <person name="Fulton R."/>
            <person name="Feng D."/>
            <person name="Wollam A."/>
            <person name="Shah N."/>
            <person name="Bhonagiri V."/>
            <person name="Nash W.E."/>
            <person name="Hallsworth-Pepin K."/>
            <person name="Wilson R.K."/>
            <person name="McClelland M."/>
            <person name="Forsythe S.J."/>
        </authorList>
    </citation>
    <scope>NUCLEOTIDE SEQUENCE [LARGE SCALE GENOMIC DNA]</scope>
    <source>
        <strain>ATCC BAA-894</strain>
    </source>
</reference>